<keyword id="KW-0032">Aminotransferase</keyword>
<keyword id="KW-0663">Pyridoxal phosphate</keyword>
<keyword id="KW-1185">Reference proteome</keyword>
<keyword id="KW-0808">Transferase</keyword>
<protein>
    <recommendedName>
        <fullName>Diaminobutyrate--2-oxoglutarate transaminase</fullName>
        <ecNumber>2.6.1.76</ecNumber>
    </recommendedName>
    <alternativeName>
        <fullName>DABA aminotransferase</fullName>
    </alternativeName>
    <alternativeName>
        <fullName>Diaminobutyrate--2-oxoglutarate aminotransferase</fullName>
    </alternativeName>
    <alternativeName>
        <fullName>L-2,4-diaminobutyric acid transaminase</fullName>
    </alternativeName>
</protein>
<gene>
    <name type="primary">ectB</name>
    <name type="ordered locus">WS0855</name>
</gene>
<evidence type="ECO:0000250" key="1"/>
<evidence type="ECO:0000255" key="2"/>
<evidence type="ECO:0000305" key="3"/>
<sequence length="427" mass="47222">MRIFEQLESQVRSYIRSFPVIFERSKGAYLYDEQGKAYIDFFAGAGTLNYGHNHPKIIEAMIAYLQNDGILHGLDKATSAKKAFLQTLSETILEPRHMDYKVQFTGPTGTNAIESALKLARMVKGRSNVIAFTNAFHGLTMGSMAVTGNAFYRDEAFVNRANVSFMPFDGYFGEEVDTSLYLRRFLEDGSSGVDLPAAIILETIQAEGGVNVARDEWLRSVEKVCRDFDILLIVDEIQVGNGRTGRFFSFEESGIRPDIITLSKSIGGGLPLALVLLRPELDQWKPGEHTGTFRGNNLAFVAAKEALEYWSDSVLGEWVKHNSAILKEGLEALVQAFPELGMSARGRGLIYGLEIPLSGMAKEVSANCFQKGLVIELAGASDTVLKFLPPLIIEEETLREGLGIIKEAIGEVLREREARMGEVFGDR</sequence>
<feature type="chain" id="PRO_0000120533" description="Diaminobutyrate--2-oxoglutarate transaminase">
    <location>
        <begin position="1"/>
        <end position="427"/>
    </location>
</feature>
<feature type="modified residue" description="N6-(pyridoxal phosphate)lysine" evidence="2">
    <location>
        <position position="264"/>
    </location>
</feature>
<dbReference type="EC" id="2.6.1.76"/>
<dbReference type="EMBL" id="BX571659">
    <property type="protein sequence ID" value="CAE09965.1"/>
    <property type="molecule type" value="Genomic_DNA"/>
</dbReference>
<dbReference type="RefSeq" id="WP_011138762.1">
    <property type="nucleotide sequence ID" value="NC_005090.1"/>
</dbReference>
<dbReference type="SMR" id="Q7M9K2"/>
<dbReference type="STRING" id="273121.WS0855"/>
<dbReference type="KEGG" id="wsu:WS0855"/>
<dbReference type="eggNOG" id="COG0160">
    <property type="taxonomic scope" value="Bacteria"/>
</dbReference>
<dbReference type="HOGENOM" id="CLU_016922_10_0_7"/>
<dbReference type="UniPathway" id="UPA00067">
    <property type="reaction ID" value="UER00121"/>
</dbReference>
<dbReference type="Proteomes" id="UP000000422">
    <property type="component" value="Chromosome"/>
</dbReference>
<dbReference type="GO" id="GO:0045303">
    <property type="term" value="F:diaminobutyrate-2-oxoglutarate transaminase activity"/>
    <property type="evidence" value="ECO:0007669"/>
    <property type="project" value="UniProtKB-EC"/>
</dbReference>
<dbReference type="GO" id="GO:0047307">
    <property type="term" value="F:diaminobutyrate-pyruvate transaminase activity"/>
    <property type="evidence" value="ECO:0007669"/>
    <property type="project" value="InterPro"/>
</dbReference>
<dbReference type="GO" id="GO:0030170">
    <property type="term" value="F:pyridoxal phosphate binding"/>
    <property type="evidence" value="ECO:0007669"/>
    <property type="project" value="InterPro"/>
</dbReference>
<dbReference type="GO" id="GO:0019491">
    <property type="term" value="P:ectoine biosynthetic process"/>
    <property type="evidence" value="ECO:0007669"/>
    <property type="project" value="UniProtKB-UniPathway"/>
</dbReference>
<dbReference type="CDD" id="cd00610">
    <property type="entry name" value="OAT_like"/>
    <property type="match status" value="1"/>
</dbReference>
<dbReference type="FunFam" id="3.40.640.10:FF:000004">
    <property type="entry name" value="Acetylornithine aminotransferase"/>
    <property type="match status" value="1"/>
</dbReference>
<dbReference type="Gene3D" id="3.90.1150.10">
    <property type="entry name" value="Aspartate Aminotransferase, domain 1"/>
    <property type="match status" value="1"/>
</dbReference>
<dbReference type="Gene3D" id="3.40.640.10">
    <property type="entry name" value="Type I PLP-dependent aspartate aminotransferase-like (Major domain)"/>
    <property type="match status" value="1"/>
</dbReference>
<dbReference type="InterPro" id="IPR005814">
    <property type="entry name" value="Aminotrans_3"/>
</dbReference>
<dbReference type="InterPro" id="IPR049704">
    <property type="entry name" value="Aminotrans_3_PPA_site"/>
</dbReference>
<dbReference type="InterPro" id="IPR004637">
    <property type="entry name" value="Dat"/>
</dbReference>
<dbReference type="InterPro" id="IPR012773">
    <property type="entry name" value="Ectoine_EctB"/>
</dbReference>
<dbReference type="InterPro" id="IPR015424">
    <property type="entry name" value="PyrdxlP-dep_Trfase"/>
</dbReference>
<dbReference type="InterPro" id="IPR015421">
    <property type="entry name" value="PyrdxlP-dep_Trfase_major"/>
</dbReference>
<dbReference type="InterPro" id="IPR015422">
    <property type="entry name" value="PyrdxlP-dep_Trfase_small"/>
</dbReference>
<dbReference type="NCBIfam" id="TIGR00709">
    <property type="entry name" value="dat"/>
    <property type="match status" value="1"/>
</dbReference>
<dbReference type="NCBIfam" id="TIGR02407">
    <property type="entry name" value="ectoine_ectB"/>
    <property type="match status" value="1"/>
</dbReference>
<dbReference type="NCBIfam" id="NF006733">
    <property type="entry name" value="PRK09264.1"/>
    <property type="match status" value="1"/>
</dbReference>
<dbReference type="PANTHER" id="PTHR43552">
    <property type="entry name" value="DIAMINOBUTYRATE--2-OXOGLUTARATE AMINOTRANSFERASE"/>
    <property type="match status" value="1"/>
</dbReference>
<dbReference type="PANTHER" id="PTHR43552:SF2">
    <property type="entry name" value="DIAMINOBUTYRATE--2-OXOGLUTARATE TRANSAMINASE"/>
    <property type="match status" value="1"/>
</dbReference>
<dbReference type="Pfam" id="PF00202">
    <property type="entry name" value="Aminotran_3"/>
    <property type="match status" value="1"/>
</dbReference>
<dbReference type="PIRSF" id="PIRSF000521">
    <property type="entry name" value="Transaminase_4ab_Lys_Orn"/>
    <property type="match status" value="1"/>
</dbReference>
<dbReference type="SUPFAM" id="SSF53383">
    <property type="entry name" value="PLP-dependent transferases"/>
    <property type="match status" value="1"/>
</dbReference>
<dbReference type="PROSITE" id="PS00600">
    <property type="entry name" value="AA_TRANSFER_CLASS_3"/>
    <property type="match status" value="1"/>
</dbReference>
<organism>
    <name type="scientific">Wolinella succinogenes (strain ATCC 29543 / DSM 1740 / CCUG 13145 / JCM 31913 / LMG 7466 / NCTC 11488 / FDC 602W)</name>
    <name type="common">Vibrio succinogenes</name>
    <dbReference type="NCBI Taxonomy" id="273121"/>
    <lineage>
        <taxon>Bacteria</taxon>
        <taxon>Pseudomonadati</taxon>
        <taxon>Campylobacterota</taxon>
        <taxon>Epsilonproteobacteria</taxon>
        <taxon>Campylobacterales</taxon>
        <taxon>Helicobacteraceae</taxon>
        <taxon>Wolinella</taxon>
    </lineage>
</organism>
<reference key="1">
    <citation type="journal article" date="2003" name="Proc. Natl. Acad. Sci. U.S.A.">
        <title>Complete genome sequence and analysis of Wolinella succinogenes.</title>
        <authorList>
            <person name="Baar C."/>
            <person name="Eppinger M."/>
            <person name="Raddatz G."/>
            <person name="Simon J."/>
            <person name="Lanz C."/>
            <person name="Klimmek O."/>
            <person name="Nandakumar R."/>
            <person name="Gross R."/>
            <person name="Rosinus A."/>
            <person name="Keller H."/>
            <person name="Jagtap P."/>
            <person name="Linke B."/>
            <person name="Meyer F."/>
            <person name="Lederer H."/>
            <person name="Schuster S.C."/>
        </authorList>
    </citation>
    <scope>NUCLEOTIDE SEQUENCE [LARGE SCALE GENOMIC DNA]</scope>
    <source>
        <strain>ATCC 29543 / DSM 1740 / CCUG 13145 / JCM 31913 / LMG 7466 / NCTC 11488 / FDC 602W</strain>
    </source>
</reference>
<name>ECTB_WOLSU</name>
<proteinExistence type="inferred from homology"/>
<accession>Q7M9K2</accession>
<comment type="function">
    <text evidence="1">Catalyzes reversively the conversion of L-aspartate beta-semialdehyde (ASA) to L-2,4-diaminobutyrate (DABA) by transamination with L-glutamate.</text>
</comment>
<comment type="catalytic activity">
    <reaction>
        <text>L-2,4-diaminobutanoate + 2-oxoglutarate = L-aspartate 4-semialdehyde + L-glutamate</text>
        <dbReference type="Rhea" id="RHEA:11160"/>
        <dbReference type="ChEBI" id="CHEBI:16810"/>
        <dbReference type="ChEBI" id="CHEBI:29985"/>
        <dbReference type="ChEBI" id="CHEBI:58761"/>
        <dbReference type="ChEBI" id="CHEBI:537519"/>
        <dbReference type="EC" id="2.6.1.76"/>
    </reaction>
</comment>
<comment type="cofactor">
    <cofactor evidence="1">
        <name>pyridoxal 5'-phosphate</name>
        <dbReference type="ChEBI" id="CHEBI:597326"/>
    </cofactor>
</comment>
<comment type="pathway">
    <text>Amine and polyamine biosynthesis; ectoine biosynthesis; L-ectoine from L-aspartate 4-semialdehyde: step 1/3.</text>
</comment>
<comment type="similarity">
    <text evidence="3">Belongs to the class-III pyridoxal-phosphate-dependent aminotransferase family.</text>
</comment>